<gene>
    <name evidence="1" type="primary">glmU</name>
    <name type="ordered locus">jk1492</name>
</gene>
<dbReference type="EC" id="2.7.7.23" evidence="1"/>
<dbReference type="EC" id="2.3.1.157" evidence="1"/>
<dbReference type="EMBL" id="CR931997">
    <property type="protein sequence ID" value="CAI37665.1"/>
    <property type="status" value="ALT_INIT"/>
    <property type="molecule type" value="Genomic_DNA"/>
</dbReference>
<dbReference type="SMR" id="Q4JU42"/>
<dbReference type="STRING" id="306537.jk1492"/>
<dbReference type="KEGG" id="cjk:jk1492"/>
<dbReference type="eggNOG" id="COG1207">
    <property type="taxonomic scope" value="Bacteria"/>
</dbReference>
<dbReference type="HOGENOM" id="CLU_029499_15_2_11"/>
<dbReference type="UniPathway" id="UPA00113">
    <property type="reaction ID" value="UER00532"/>
</dbReference>
<dbReference type="UniPathway" id="UPA00113">
    <property type="reaction ID" value="UER00533"/>
</dbReference>
<dbReference type="UniPathway" id="UPA00973"/>
<dbReference type="Proteomes" id="UP000000545">
    <property type="component" value="Chromosome"/>
</dbReference>
<dbReference type="GO" id="GO:0005737">
    <property type="term" value="C:cytoplasm"/>
    <property type="evidence" value="ECO:0007669"/>
    <property type="project" value="UniProtKB-SubCell"/>
</dbReference>
<dbReference type="GO" id="GO:0016020">
    <property type="term" value="C:membrane"/>
    <property type="evidence" value="ECO:0007669"/>
    <property type="project" value="GOC"/>
</dbReference>
<dbReference type="GO" id="GO:0019134">
    <property type="term" value="F:glucosamine-1-phosphate N-acetyltransferase activity"/>
    <property type="evidence" value="ECO:0007669"/>
    <property type="project" value="UniProtKB-UniRule"/>
</dbReference>
<dbReference type="GO" id="GO:0000287">
    <property type="term" value="F:magnesium ion binding"/>
    <property type="evidence" value="ECO:0007669"/>
    <property type="project" value="UniProtKB-UniRule"/>
</dbReference>
<dbReference type="GO" id="GO:0003977">
    <property type="term" value="F:UDP-N-acetylglucosamine diphosphorylase activity"/>
    <property type="evidence" value="ECO:0007669"/>
    <property type="project" value="UniProtKB-UniRule"/>
</dbReference>
<dbReference type="GO" id="GO:0000902">
    <property type="term" value="P:cell morphogenesis"/>
    <property type="evidence" value="ECO:0007669"/>
    <property type="project" value="UniProtKB-UniRule"/>
</dbReference>
<dbReference type="GO" id="GO:0071555">
    <property type="term" value="P:cell wall organization"/>
    <property type="evidence" value="ECO:0007669"/>
    <property type="project" value="UniProtKB-KW"/>
</dbReference>
<dbReference type="GO" id="GO:0009245">
    <property type="term" value="P:lipid A biosynthetic process"/>
    <property type="evidence" value="ECO:0007669"/>
    <property type="project" value="UniProtKB-UniRule"/>
</dbReference>
<dbReference type="GO" id="GO:0009252">
    <property type="term" value="P:peptidoglycan biosynthetic process"/>
    <property type="evidence" value="ECO:0007669"/>
    <property type="project" value="UniProtKB-UniRule"/>
</dbReference>
<dbReference type="GO" id="GO:0008360">
    <property type="term" value="P:regulation of cell shape"/>
    <property type="evidence" value="ECO:0007669"/>
    <property type="project" value="UniProtKB-KW"/>
</dbReference>
<dbReference type="GO" id="GO:0006048">
    <property type="term" value="P:UDP-N-acetylglucosamine biosynthetic process"/>
    <property type="evidence" value="ECO:0007669"/>
    <property type="project" value="UniProtKB-UniPathway"/>
</dbReference>
<dbReference type="CDD" id="cd02540">
    <property type="entry name" value="GT2_GlmU_N_bac"/>
    <property type="match status" value="1"/>
</dbReference>
<dbReference type="CDD" id="cd03353">
    <property type="entry name" value="LbH_GlmU_C"/>
    <property type="match status" value="1"/>
</dbReference>
<dbReference type="Gene3D" id="2.160.10.10">
    <property type="entry name" value="Hexapeptide repeat proteins"/>
    <property type="match status" value="1"/>
</dbReference>
<dbReference type="Gene3D" id="3.90.550.10">
    <property type="entry name" value="Spore Coat Polysaccharide Biosynthesis Protein SpsA, Chain A"/>
    <property type="match status" value="1"/>
</dbReference>
<dbReference type="HAMAP" id="MF_01631">
    <property type="entry name" value="GlmU"/>
    <property type="match status" value="1"/>
</dbReference>
<dbReference type="InterPro" id="IPR005882">
    <property type="entry name" value="Bifunctional_GlmU"/>
</dbReference>
<dbReference type="InterPro" id="IPR050065">
    <property type="entry name" value="GlmU-like"/>
</dbReference>
<dbReference type="InterPro" id="IPR038009">
    <property type="entry name" value="GlmU_C_LbH"/>
</dbReference>
<dbReference type="InterPro" id="IPR001451">
    <property type="entry name" value="Hexapep"/>
</dbReference>
<dbReference type="InterPro" id="IPR025877">
    <property type="entry name" value="MobA-like_NTP_Trfase"/>
</dbReference>
<dbReference type="InterPro" id="IPR029044">
    <property type="entry name" value="Nucleotide-diphossugar_trans"/>
</dbReference>
<dbReference type="InterPro" id="IPR011004">
    <property type="entry name" value="Trimer_LpxA-like_sf"/>
</dbReference>
<dbReference type="NCBIfam" id="TIGR01173">
    <property type="entry name" value="glmU"/>
    <property type="match status" value="1"/>
</dbReference>
<dbReference type="NCBIfam" id="NF010932">
    <property type="entry name" value="PRK14352.1"/>
    <property type="match status" value="1"/>
</dbReference>
<dbReference type="PANTHER" id="PTHR43584:SF3">
    <property type="entry name" value="BIFUNCTIONAL PROTEIN GLMU"/>
    <property type="match status" value="1"/>
</dbReference>
<dbReference type="PANTHER" id="PTHR43584">
    <property type="entry name" value="NUCLEOTIDYL TRANSFERASE"/>
    <property type="match status" value="1"/>
</dbReference>
<dbReference type="Pfam" id="PF00132">
    <property type="entry name" value="Hexapep"/>
    <property type="match status" value="1"/>
</dbReference>
<dbReference type="Pfam" id="PF12804">
    <property type="entry name" value="NTP_transf_3"/>
    <property type="match status" value="1"/>
</dbReference>
<dbReference type="SUPFAM" id="SSF53448">
    <property type="entry name" value="Nucleotide-diphospho-sugar transferases"/>
    <property type="match status" value="1"/>
</dbReference>
<dbReference type="SUPFAM" id="SSF51161">
    <property type="entry name" value="Trimeric LpxA-like enzymes"/>
    <property type="match status" value="1"/>
</dbReference>
<organism>
    <name type="scientific">Corynebacterium jeikeium (strain K411)</name>
    <dbReference type="NCBI Taxonomy" id="306537"/>
    <lineage>
        <taxon>Bacteria</taxon>
        <taxon>Bacillati</taxon>
        <taxon>Actinomycetota</taxon>
        <taxon>Actinomycetes</taxon>
        <taxon>Mycobacteriales</taxon>
        <taxon>Corynebacteriaceae</taxon>
        <taxon>Corynebacterium</taxon>
    </lineage>
</organism>
<feature type="chain" id="PRO_0000233763" description="Bifunctional protein GlmU">
    <location>
        <begin position="1"/>
        <end position="487"/>
    </location>
</feature>
<feature type="region of interest" description="Pyrophosphorylase" evidence="1">
    <location>
        <begin position="1"/>
        <end position="232"/>
    </location>
</feature>
<feature type="region of interest" description="Linker" evidence="1">
    <location>
        <begin position="233"/>
        <end position="253"/>
    </location>
</feature>
<feature type="region of interest" description="N-acetyltransferase" evidence="1">
    <location>
        <begin position="254"/>
        <end position="487"/>
    </location>
</feature>
<feature type="region of interest" description="Disordered" evidence="2">
    <location>
        <begin position="453"/>
        <end position="487"/>
    </location>
</feature>
<feature type="compositionally biased region" description="Polar residues" evidence="2">
    <location>
        <begin position="477"/>
        <end position="487"/>
    </location>
</feature>
<feature type="active site" description="Proton acceptor" evidence="1">
    <location>
        <position position="365"/>
    </location>
</feature>
<feature type="binding site" evidence="1">
    <location>
        <begin position="6"/>
        <end position="9"/>
    </location>
    <ligand>
        <name>UDP-N-acetyl-alpha-D-glucosamine</name>
        <dbReference type="ChEBI" id="CHEBI:57705"/>
    </ligand>
</feature>
<feature type="binding site" evidence="1">
    <location>
        <position position="20"/>
    </location>
    <ligand>
        <name>UDP-N-acetyl-alpha-D-glucosamine</name>
        <dbReference type="ChEBI" id="CHEBI:57705"/>
    </ligand>
</feature>
<feature type="binding site" evidence="1">
    <location>
        <position position="77"/>
    </location>
    <ligand>
        <name>UDP-N-acetyl-alpha-D-glucosamine</name>
        <dbReference type="ChEBI" id="CHEBI:57705"/>
    </ligand>
</feature>
<feature type="binding site" evidence="1">
    <location>
        <begin position="82"/>
        <end position="83"/>
    </location>
    <ligand>
        <name>UDP-N-acetyl-alpha-D-glucosamine</name>
        <dbReference type="ChEBI" id="CHEBI:57705"/>
    </ligand>
</feature>
<feature type="binding site" evidence="1">
    <location>
        <position position="107"/>
    </location>
    <ligand>
        <name>Mg(2+)</name>
        <dbReference type="ChEBI" id="CHEBI:18420"/>
    </ligand>
</feature>
<feature type="binding site" evidence="1">
    <location>
        <position position="142"/>
    </location>
    <ligand>
        <name>UDP-N-acetyl-alpha-D-glucosamine</name>
        <dbReference type="ChEBI" id="CHEBI:57705"/>
    </ligand>
</feature>
<feature type="binding site" evidence="1">
    <location>
        <position position="157"/>
    </location>
    <ligand>
        <name>UDP-N-acetyl-alpha-D-glucosamine</name>
        <dbReference type="ChEBI" id="CHEBI:57705"/>
    </ligand>
</feature>
<feature type="binding site" evidence="1">
    <location>
        <position position="172"/>
    </location>
    <ligand>
        <name>UDP-N-acetyl-alpha-D-glucosamine</name>
        <dbReference type="ChEBI" id="CHEBI:57705"/>
    </ligand>
</feature>
<feature type="binding site" evidence="1">
    <location>
        <position position="230"/>
    </location>
    <ligand>
        <name>Mg(2+)</name>
        <dbReference type="ChEBI" id="CHEBI:18420"/>
    </ligand>
</feature>
<feature type="binding site" evidence="1">
    <location>
        <position position="230"/>
    </location>
    <ligand>
        <name>UDP-N-acetyl-alpha-D-glucosamine</name>
        <dbReference type="ChEBI" id="CHEBI:57705"/>
    </ligand>
</feature>
<feature type="binding site" evidence="1">
    <location>
        <position position="335"/>
    </location>
    <ligand>
        <name>UDP-N-acetyl-alpha-D-glucosamine</name>
        <dbReference type="ChEBI" id="CHEBI:57705"/>
    </ligand>
</feature>
<feature type="binding site" evidence="1">
    <location>
        <position position="353"/>
    </location>
    <ligand>
        <name>UDP-N-acetyl-alpha-D-glucosamine</name>
        <dbReference type="ChEBI" id="CHEBI:57705"/>
    </ligand>
</feature>
<feature type="binding site" evidence="1">
    <location>
        <position position="368"/>
    </location>
    <ligand>
        <name>UDP-N-acetyl-alpha-D-glucosamine</name>
        <dbReference type="ChEBI" id="CHEBI:57705"/>
    </ligand>
</feature>
<feature type="binding site" evidence="1">
    <location>
        <position position="379"/>
    </location>
    <ligand>
        <name>UDP-N-acetyl-alpha-D-glucosamine</name>
        <dbReference type="ChEBI" id="CHEBI:57705"/>
    </ligand>
</feature>
<feature type="binding site" evidence="1">
    <location>
        <position position="382"/>
    </location>
    <ligand>
        <name>acetyl-CoA</name>
        <dbReference type="ChEBI" id="CHEBI:57288"/>
    </ligand>
</feature>
<feature type="binding site" evidence="1">
    <location>
        <begin position="388"/>
        <end position="389"/>
    </location>
    <ligand>
        <name>acetyl-CoA</name>
        <dbReference type="ChEBI" id="CHEBI:57288"/>
    </ligand>
</feature>
<feature type="binding site" evidence="1">
    <location>
        <position position="407"/>
    </location>
    <ligand>
        <name>acetyl-CoA</name>
        <dbReference type="ChEBI" id="CHEBI:57288"/>
    </ligand>
</feature>
<feature type="binding site" evidence="1">
    <location>
        <position position="425"/>
    </location>
    <ligand>
        <name>acetyl-CoA</name>
        <dbReference type="ChEBI" id="CHEBI:57288"/>
    </ligand>
</feature>
<sequence>MAVIVLAAGAGTRMKSTTQKTLHSIGGRTLLSHSLHAAAGIDPARIVAVIGHGREQVGPAVAEVAEQLGRSIDTAIQEQQNGTGHAVQCAMEQLEGFEGTVVVTNADVPLLSPETLQELTATHDGASVTVLSVNQDNPTGYGRILRTNDGMVTAIVEEKDATEKQKEITEVNSGVFAFDAAILRDGLAQLNTDNAQGELYLTDVLSIARRAGHPVRAHIASDAAELAGVNDRVQLAAAGAELNRRTVTAAMRGGATIVDPATTWIDVDVQVGQDVTILPGTQLLGTTTIGDNAQIGPDTTLENVKVGEGAQVVRTHGFDSTIGPRAEVGPFTYIRPGTVLGEEGKLGGFVEAKKANIGRGSKVPHLTYVGDATIGEYSNIGASSVFVNYDGVNKHHTTVGSHVRTGSDSMFIAPVVVGDGAYSGAGTVIKEDVPPGALVVSGGKQRNVEGWVAKKRPGTPAAEAGEAAAKRVAEGGSPTSTPQADQE</sequence>
<protein>
    <recommendedName>
        <fullName evidence="1">Bifunctional protein GlmU</fullName>
    </recommendedName>
    <domain>
        <recommendedName>
            <fullName evidence="1">UDP-N-acetylglucosamine pyrophosphorylase</fullName>
            <ecNumber evidence="1">2.7.7.23</ecNumber>
        </recommendedName>
        <alternativeName>
            <fullName evidence="1">N-acetylglucosamine-1-phosphate uridyltransferase</fullName>
        </alternativeName>
    </domain>
    <domain>
        <recommendedName>
            <fullName evidence="1">Glucosamine-1-phosphate N-acetyltransferase</fullName>
            <ecNumber evidence="1">2.3.1.157</ecNumber>
        </recommendedName>
    </domain>
</protein>
<comment type="function">
    <text evidence="1">Catalyzes the last two sequential reactions in the de novo biosynthetic pathway for UDP-N-acetylglucosamine (UDP-GlcNAc). The C-terminal domain catalyzes the transfer of acetyl group from acetyl coenzyme A to glucosamine-1-phosphate (GlcN-1-P) to produce N-acetylglucosamine-1-phosphate (GlcNAc-1-P), which is converted into UDP-GlcNAc by the transfer of uridine 5-monophosphate (from uridine 5-triphosphate), a reaction catalyzed by the N-terminal domain.</text>
</comment>
<comment type="catalytic activity">
    <reaction evidence="1">
        <text>alpha-D-glucosamine 1-phosphate + acetyl-CoA = N-acetyl-alpha-D-glucosamine 1-phosphate + CoA + H(+)</text>
        <dbReference type="Rhea" id="RHEA:13725"/>
        <dbReference type="ChEBI" id="CHEBI:15378"/>
        <dbReference type="ChEBI" id="CHEBI:57287"/>
        <dbReference type="ChEBI" id="CHEBI:57288"/>
        <dbReference type="ChEBI" id="CHEBI:57776"/>
        <dbReference type="ChEBI" id="CHEBI:58516"/>
        <dbReference type="EC" id="2.3.1.157"/>
    </reaction>
</comment>
<comment type="catalytic activity">
    <reaction evidence="1">
        <text>N-acetyl-alpha-D-glucosamine 1-phosphate + UTP + H(+) = UDP-N-acetyl-alpha-D-glucosamine + diphosphate</text>
        <dbReference type="Rhea" id="RHEA:13509"/>
        <dbReference type="ChEBI" id="CHEBI:15378"/>
        <dbReference type="ChEBI" id="CHEBI:33019"/>
        <dbReference type="ChEBI" id="CHEBI:46398"/>
        <dbReference type="ChEBI" id="CHEBI:57705"/>
        <dbReference type="ChEBI" id="CHEBI:57776"/>
        <dbReference type="EC" id="2.7.7.23"/>
    </reaction>
</comment>
<comment type="cofactor">
    <cofactor evidence="1">
        <name>Mg(2+)</name>
        <dbReference type="ChEBI" id="CHEBI:18420"/>
    </cofactor>
    <text evidence="1">Binds 1 Mg(2+) ion per subunit.</text>
</comment>
<comment type="pathway">
    <text evidence="1">Nucleotide-sugar biosynthesis; UDP-N-acetyl-alpha-D-glucosamine biosynthesis; N-acetyl-alpha-D-glucosamine 1-phosphate from alpha-D-glucosamine 6-phosphate (route II): step 2/2.</text>
</comment>
<comment type="pathway">
    <text evidence="1">Nucleotide-sugar biosynthesis; UDP-N-acetyl-alpha-D-glucosamine biosynthesis; UDP-N-acetyl-alpha-D-glucosamine from N-acetyl-alpha-D-glucosamine 1-phosphate: step 1/1.</text>
</comment>
<comment type="pathway">
    <text evidence="1">Bacterial outer membrane biogenesis; LPS lipid A biosynthesis.</text>
</comment>
<comment type="subunit">
    <text evidence="1">Homotrimer.</text>
</comment>
<comment type="subcellular location">
    <subcellularLocation>
        <location evidence="1">Cytoplasm</location>
    </subcellularLocation>
</comment>
<comment type="similarity">
    <text evidence="1">In the N-terminal section; belongs to the N-acetylglucosamine-1-phosphate uridyltransferase family.</text>
</comment>
<comment type="similarity">
    <text evidence="1">In the C-terminal section; belongs to the transferase hexapeptide repeat family.</text>
</comment>
<comment type="sequence caution" evidence="3">
    <conflict type="erroneous initiation">
        <sequence resource="EMBL-CDS" id="CAI37665"/>
    </conflict>
</comment>
<name>GLMU_CORJK</name>
<proteinExistence type="inferred from homology"/>
<accession>Q4JU42</accession>
<keyword id="KW-0012">Acyltransferase</keyword>
<keyword id="KW-0133">Cell shape</keyword>
<keyword id="KW-0961">Cell wall biogenesis/degradation</keyword>
<keyword id="KW-0963">Cytoplasm</keyword>
<keyword id="KW-0460">Magnesium</keyword>
<keyword id="KW-0479">Metal-binding</keyword>
<keyword id="KW-0511">Multifunctional enzyme</keyword>
<keyword id="KW-0548">Nucleotidyltransferase</keyword>
<keyword id="KW-0573">Peptidoglycan synthesis</keyword>
<keyword id="KW-1185">Reference proteome</keyword>
<keyword id="KW-0677">Repeat</keyword>
<keyword id="KW-0808">Transferase</keyword>
<reference key="1">
    <citation type="journal article" date="2005" name="J. Bacteriol.">
        <title>Complete genome sequence and analysis of the multiresistant nosocomial pathogen Corynebacterium jeikeium K411, a lipid-requiring bacterium of the human skin flora.</title>
        <authorList>
            <person name="Tauch A."/>
            <person name="Kaiser O."/>
            <person name="Hain T."/>
            <person name="Goesmann A."/>
            <person name="Weisshaar B."/>
            <person name="Albersmeier A."/>
            <person name="Bekel T."/>
            <person name="Bischoff N."/>
            <person name="Brune I."/>
            <person name="Chakraborty T."/>
            <person name="Kalinowski J."/>
            <person name="Meyer F."/>
            <person name="Rupp O."/>
            <person name="Schneiker S."/>
            <person name="Viehoever P."/>
            <person name="Puehler A."/>
        </authorList>
    </citation>
    <scope>NUCLEOTIDE SEQUENCE [LARGE SCALE GENOMIC DNA]</scope>
    <source>
        <strain>K411</strain>
    </source>
</reference>
<evidence type="ECO:0000255" key="1">
    <source>
        <dbReference type="HAMAP-Rule" id="MF_01631"/>
    </source>
</evidence>
<evidence type="ECO:0000256" key="2">
    <source>
        <dbReference type="SAM" id="MobiDB-lite"/>
    </source>
</evidence>
<evidence type="ECO:0000305" key="3"/>